<gene>
    <name type="primary">Rpp25</name>
</gene>
<feature type="chain" id="PRO_0000237584" description="Ribonuclease P protein subunit p25">
    <location>
        <begin position="1"/>
        <end position="199"/>
    </location>
</feature>
<feature type="region of interest" description="Disordered" evidence="2">
    <location>
        <begin position="1"/>
        <end position="31"/>
    </location>
</feature>
<feature type="region of interest" description="Disordered" evidence="2">
    <location>
        <begin position="146"/>
        <end position="199"/>
    </location>
</feature>
<feature type="compositionally biased region" description="Basic and acidic residues" evidence="2">
    <location>
        <begin position="1"/>
        <end position="11"/>
    </location>
</feature>
<feature type="compositionally biased region" description="Acidic residues" evidence="2">
    <location>
        <begin position="190"/>
        <end position="199"/>
    </location>
</feature>
<feature type="modified residue" description="Phosphoserine" evidence="1">
    <location>
        <position position="172"/>
    </location>
</feature>
<proteinExistence type="evidence at transcript level"/>
<organism>
    <name type="scientific">Rattus norvegicus</name>
    <name type="common">Rat</name>
    <dbReference type="NCBI Taxonomy" id="10116"/>
    <lineage>
        <taxon>Eukaryota</taxon>
        <taxon>Metazoa</taxon>
        <taxon>Chordata</taxon>
        <taxon>Craniata</taxon>
        <taxon>Vertebrata</taxon>
        <taxon>Euteleostomi</taxon>
        <taxon>Mammalia</taxon>
        <taxon>Eutheria</taxon>
        <taxon>Euarchontoglires</taxon>
        <taxon>Glires</taxon>
        <taxon>Rodentia</taxon>
        <taxon>Myomorpha</taxon>
        <taxon>Muroidea</taxon>
        <taxon>Muridae</taxon>
        <taxon>Murinae</taxon>
        <taxon>Rattus</taxon>
    </lineage>
</organism>
<accession>Q5PPN2</accession>
<dbReference type="EMBL" id="BC087592">
    <property type="protein sequence ID" value="AAH87592.1"/>
    <property type="molecule type" value="mRNA"/>
</dbReference>
<dbReference type="RefSeq" id="NP_001012124.1">
    <property type="nucleotide sequence ID" value="NM_001012124.1"/>
</dbReference>
<dbReference type="SMR" id="Q5PPN2"/>
<dbReference type="FunCoup" id="Q5PPN2">
    <property type="interactions" value="154"/>
</dbReference>
<dbReference type="STRING" id="10116.ENSRNOP00000025408"/>
<dbReference type="GlyGen" id="Q5PPN2">
    <property type="glycosylation" value="1 site"/>
</dbReference>
<dbReference type="iPTMnet" id="Q5PPN2"/>
<dbReference type="PhosphoSitePlus" id="Q5PPN2"/>
<dbReference type="jPOST" id="Q5PPN2"/>
<dbReference type="PaxDb" id="10116-ENSRNOP00000025408"/>
<dbReference type="Ensembl" id="ENSRNOT00000025410.4">
    <property type="protein sequence ID" value="ENSRNOP00000025408.2"/>
    <property type="gene ID" value="ENSRNOG00000018812.4"/>
</dbReference>
<dbReference type="GeneID" id="315705"/>
<dbReference type="KEGG" id="rno:315705"/>
<dbReference type="UCSC" id="RGD:1305290">
    <property type="organism name" value="rat"/>
</dbReference>
<dbReference type="AGR" id="RGD:1305290"/>
<dbReference type="CTD" id="54913"/>
<dbReference type="RGD" id="1305290">
    <property type="gene designation" value="Rpp25"/>
</dbReference>
<dbReference type="eggNOG" id="KOG2567">
    <property type="taxonomic scope" value="Eukaryota"/>
</dbReference>
<dbReference type="GeneTree" id="ENSGT00390000002564"/>
<dbReference type="HOGENOM" id="CLU_096311_0_0_1"/>
<dbReference type="InParanoid" id="Q5PPN2"/>
<dbReference type="OMA" id="WENKDPQ"/>
<dbReference type="OrthoDB" id="424402at2759"/>
<dbReference type="PhylomeDB" id="Q5PPN2"/>
<dbReference type="TreeFam" id="TF325688"/>
<dbReference type="Reactome" id="R-RNO-6791226">
    <property type="pathway name" value="Major pathway of rRNA processing in the nucleolus and cytosol"/>
</dbReference>
<dbReference type="PRO" id="PR:Q5PPN2"/>
<dbReference type="Proteomes" id="UP000002494">
    <property type="component" value="Chromosome 8"/>
</dbReference>
<dbReference type="Bgee" id="ENSRNOG00000018812">
    <property type="expression patterns" value="Expressed in ovary and 16 other cell types or tissues"/>
</dbReference>
<dbReference type="GO" id="GO:0034451">
    <property type="term" value="C:centriolar satellite"/>
    <property type="evidence" value="ECO:0007669"/>
    <property type="project" value="Ensembl"/>
</dbReference>
<dbReference type="GO" id="GO:0030681">
    <property type="term" value="C:multimeric ribonuclease P complex"/>
    <property type="evidence" value="ECO:0000250"/>
    <property type="project" value="UniProtKB"/>
</dbReference>
<dbReference type="GO" id="GO:0005730">
    <property type="term" value="C:nucleolus"/>
    <property type="evidence" value="ECO:0007669"/>
    <property type="project" value="UniProtKB-SubCell"/>
</dbReference>
<dbReference type="GO" id="GO:0005654">
    <property type="term" value="C:nucleoplasm"/>
    <property type="evidence" value="ECO:0007669"/>
    <property type="project" value="Ensembl"/>
</dbReference>
<dbReference type="GO" id="GO:0000172">
    <property type="term" value="C:ribonuclease MRP complex"/>
    <property type="evidence" value="ECO:0000266"/>
    <property type="project" value="RGD"/>
</dbReference>
<dbReference type="GO" id="GO:0004526">
    <property type="term" value="F:ribonuclease P activity"/>
    <property type="evidence" value="ECO:0007669"/>
    <property type="project" value="UniProtKB-EC"/>
</dbReference>
<dbReference type="GO" id="GO:0033204">
    <property type="term" value="F:ribonuclease P RNA binding"/>
    <property type="evidence" value="ECO:0000250"/>
    <property type="project" value="UniProtKB"/>
</dbReference>
<dbReference type="GO" id="GO:0003723">
    <property type="term" value="F:RNA binding"/>
    <property type="evidence" value="ECO:0000318"/>
    <property type="project" value="GO_Central"/>
</dbReference>
<dbReference type="GO" id="GO:0006364">
    <property type="term" value="P:rRNA processing"/>
    <property type="evidence" value="ECO:0007669"/>
    <property type="project" value="UniProtKB-KW"/>
</dbReference>
<dbReference type="GO" id="GO:0001682">
    <property type="term" value="P:tRNA 5'-leader removal"/>
    <property type="evidence" value="ECO:0000250"/>
    <property type="project" value="UniProtKB"/>
</dbReference>
<dbReference type="FunFam" id="3.30.110.20:FF:000006">
    <property type="entry name" value="Ribonuclease P protein subunit p25"/>
    <property type="match status" value="1"/>
</dbReference>
<dbReference type="Gene3D" id="3.30.110.20">
    <property type="entry name" value="Alba-like domain"/>
    <property type="match status" value="1"/>
</dbReference>
<dbReference type="InterPro" id="IPR036882">
    <property type="entry name" value="Alba-like_dom_sf"/>
</dbReference>
<dbReference type="InterPro" id="IPR051958">
    <property type="entry name" value="Alba-like_NAB"/>
</dbReference>
<dbReference type="InterPro" id="IPR002775">
    <property type="entry name" value="DNA/RNA-bd_Alba-like"/>
</dbReference>
<dbReference type="PANTHER" id="PTHR13516:SF5">
    <property type="entry name" value="RIBONUCLEASE P PROTEIN SUBUNIT P25"/>
    <property type="match status" value="1"/>
</dbReference>
<dbReference type="PANTHER" id="PTHR13516">
    <property type="entry name" value="RIBONUCLEASE P SUBUNIT P25"/>
    <property type="match status" value="1"/>
</dbReference>
<dbReference type="Pfam" id="PF01918">
    <property type="entry name" value="Alba"/>
    <property type="match status" value="1"/>
</dbReference>
<dbReference type="SUPFAM" id="SSF82704">
    <property type="entry name" value="AlbA-like"/>
    <property type="match status" value="1"/>
</dbReference>
<protein>
    <recommendedName>
        <fullName>Ribonuclease P protein subunit p25</fullName>
        <shortName>RNase P protein subunit p25</shortName>
    </recommendedName>
</protein>
<name>RPP25_RAT</name>
<reference key="1">
    <citation type="journal article" date="2004" name="Genome Res.">
        <title>The status, quality, and expansion of the NIH full-length cDNA project: the Mammalian Gene Collection (MGC).</title>
        <authorList>
            <consortium name="The MGC Project Team"/>
        </authorList>
    </citation>
    <scope>NUCLEOTIDE SEQUENCE [LARGE SCALE MRNA]</scope>
    <source>
        <tissue>Ovary</tissue>
    </source>
</reference>
<keyword id="KW-0539">Nucleus</keyword>
<keyword id="KW-0597">Phosphoprotein</keyword>
<keyword id="KW-1185">Reference proteome</keyword>
<keyword id="KW-0694">RNA-binding</keyword>
<keyword id="KW-0698">rRNA processing</keyword>
<keyword id="KW-0819">tRNA processing</keyword>
<comment type="function">
    <text evidence="1">Component of ribonuclease P, a ribonucleoprotein complex that generates mature tRNA molecules by cleaving their 5'-ends. Also a component of the MRP ribonuclease complex, which cleaves pre-rRNA sequences.</text>
</comment>
<comment type="subunit">
    <text evidence="1">Component of nuclear RNase P and RNase MRP ribonucleoproteins. RNase P consists of a catalytic RNA moiety and 10 different protein chains; POP1, POP4, POP5, POP7, RPP14, RPP21, RPP25, RPP30, RPP38 and RPP40. Within the RNase P complex, POP1, POP7 and RPP25 form the 'finger' subcomplex, POP5, RPP14, RPP40 and homodimeric RPP30 form the 'palm' subcomplex, and RPP21, POP4 and RPP38 form the 'wrist' subcomplex. All subunits of the RNase P complex interact with the catalytic RNA. Several subunits of RNase P are also part of the RNase MRP complex. RNase MRP consists of a catalytic RNA moiety and about 8 protein subunits; POP1, POP7, RPP25, RPP30, RPP38, RPP40 and possibly also POP4 and POP5. POP7 forms a heterodimer with RPP25 that binds to the P3 stem loop of the catalytic RNA.</text>
</comment>
<comment type="subcellular location">
    <subcellularLocation>
        <location evidence="1">Nucleus</location>
        <location evidence="1">Nucleolus</location>
    </subcellularLocation>
</comment>
<comment type="similarity">
    <text evidence="3">Belongs to the histone-like Alba family.</text>
</comment>
<sequence length="199" mass="20939">MENFRKVRSEEAPAGDGDEGGSPSSGPFADLAPGAVHMRVKEGSKIRNLLAFATASMAQPATRAIVFSGCGRATTKTVTCAEILKRRLAGLHQVTRLRYRSVREVWQSLPPGPTPGQTPSDPAASLSVLKNVPSLAILLSKDALDPRQLGYQPPNLSPGPSSPPTVSTSKRSLGESAAGEGTAKRSQPEPEAENEDRTA</sequence>
<evidence type="ECO:0000250" key="1">
    <source>
        <dbReference type="UniProtKB" id="Q9BUL9"/>
    </source>
</evidence>
<evidence type="ECO:0000256" key="2">
    <source>
        <dbReference type="SAM" id="MobiDB-lite"/>
    </source>
</evidence>
<evidence type="ECO:0000305" key="3"/>